<keyword id="KW-0120">Carbon dioxide fixation</keyword>
<keyword id="KW-0456">Lyase</keyword>
<keyword id="KW-0460">Magnesium</keyword>
<keyword id="KW-0479">Metal-binding</keyword>
<keyword id="KW-0560">Oxidoreductase</keyword>
<keyword id="KW-1185">Reference proteome</keyword>
<feature type="chain" id="PRO_0000062673" description="Ribulose bisphosphate carboxylase">
    <location>
        <begin position="1"/>
        <end position="425"/>
    </location>
</feature>
<feature type="active site" description="Proton acceptor" evidence="1">
    <location>
        <position position="153"/>
    </location>
</feature>
<feature type="active site" description="Proton acceptor" evidence="1">
    <location>
        <position position="269"/>
    </location>
</feature>
<feature type="binding site" evidence="1">
    <location>
        <position position="155"/>
    </location>
    <ligand>
        <name>substrate</name>
    </ligand>
</feature>
<feature type="binding site" description="via carbamate group" evidence="1">
    <location>
        <position position="179"/>
    </location>
    <ligand>
        <name>Mg(2+)</name>
        <dbReference type="ChEBI" id="CHEBI:18420"/>
    </ligand>
</feature>
<feature type="binding site" evidence="1">
    <location>
        <position position="181"/>
    </location>
    <ligand>
        <name>Mg(2+)</name>
        <dbReference type="ChEBI" id="CHEBI:18420"/>
    </ligand>
</feature>
<feature type="binding site" evidence="1">
    <location>
        <position position="182"/>
    </location>
    <ligand>
        <name>Mg(2+)</name>
        <dbReference type="ChEBI" id="CHEBI:18420"/>
    </ligand>
</feature>
<feature type="binding site" evidence="1">
    <location>
        <position position="270"/>
    </location>
    <ligand>
        <name>substrate</name>
    </ligand>
</feature>
<feature type="binding site" evidence="1">
    <location>
        <position position="302"/>
    </location>
    <ligand>
        <name>substrate</name>
    </ligand>
</feature>
<feature type="binding site" evidence="1">
    <location>
        <begin position="353"/>
        <end position="355"/>
    </location>
    <ligand>
        <name>substrate</name>
    </ligand>
</feature>
<feature type="binding site" evidence="1">
    <location>
        <begin position="375"/>
        <end position="378"/>
    </location>
    <ligand>
        <name>substrate</name>
    </ligand>
</feature>
<feature type="site" description="Transition state stabilizer" evidence="1">
    <location>
        <position position="309"/>
    </location>
</feature>
<feature type="modified residue" description="N6-carboxylysine" evidence="1">
    <location>
        <position position="179"/>
    </location>
</feature>
<protein>
    <recommendedName>
        <fullName evidence="1">Ribulose bisphosphate carboxylase</fullName>
        <shortName evidence="1">RuBisCO</shortName>
        <ecNumber evidence="1">4.1.1.39</ecNumber>
    </recommendedName>
</protein>
<proteinExistence type="evidence at protein level"/>
<gene>
    <name evidence="1" type="primary">rbcL</name>
    <name type="ordered locus">MJ1235</name>
</gene>
<organism>
    <name type="scientific">Methanocaldococcus jannaschii (strain ATCC 43067 / DSM 2661 / JAL-1 / JCM 10045 / NBRC 100440)</name>
    <name type="common">Methanococcus jannaschii</name>
    <dbReference type="NCBI Taxonomy" id="243232"/>
    <lineage>
        <taxon>Archaea</taxon>
        <taxon>Methanobacteriati</taxon>
        <taxon>Methanobacteriota</taxon>
        <taxon>Methanomada group</taxon>
        <taxon>Methanococci</taxon>
        <taxon>Methanococcales</taxon>
        <taxon>Methanocaldococcaceae</taxon>
        <taxon>Methanocaldococcus</taxon>
    </lineage>
</organism>
<accession>Q58632</accession>
<dbReference type="EC" id="4.1.1.39" evidence="1"/>
<dbReference type="EMBL" id="L77117">
    <property type="protein sequence ID" value="AAB99239.1"/>
    <property type="molecule type" value="Genomic_DNA"/>
</dbReference>
<dbReference type="RefSeq" id="WP_010870747.1">
    <property type="nucleotide sequence ID" value="NC_000909.1"/>
</dbReference>
<dbReference type="SMR" id="Q58632"/>
<dbReference type="FunCoup" id="Q58632">
    <property type="interactions" value="97"/>
</dbReference>
<dbReference type="STRING" id="243232.MJ_1235"/>
<dbReference type="PaxDb" id="243232-MJ_1235"/>
<dbReference type="DNASU" id="1452131"/>
<dbReference type="EnsemblBacteria" id="AAB99239">
    <property type="protein sequence ID" value="AAB99239"/>
    <property type="gene ID" value="MJ_1235"/>
</dbReference>
<dbReference type="GeneID" id="1452131"/>
<dbReference type="KEGG" id="mja:MJ_1235"/>
<dbReference type="eggNOG" id="arCOG04443">
    <property type="taxonomic scope" value="Archaea"/>
</dbReference>
<dbReference type="HOGENOM" id="CLU_031450_3_1_2"/>
<dbReference type="InParanoid" id="Q58632"/>
<dbReference type="OrthoDB" id="52787at2157"/>
<dbReference type="PhylomeDB" id="Q58632"/>
<dbReference type="BRENDA" id="4.1.1.39">
    <property type="organism ID" value="3260"/>
</dbReference>
<dbReference type="Proteomes" id="UP000000805">
    <property type="component" value="Chromosome"/>
</dbReference>
<dbReference type="GO" id="GO:0000287">
    <property type="term" value="F:magnesium ion binding"/>
    <property type="evidence" value="ECO:0007669"/>
    <property type="project" value="UniProtKB-UniRule"/>
</dbReference>
<dbReference type="GO" id="GO:0016491">
    <property type="term" value="F:oxidoreductase activity"/>
    <property type="evidence" value="ECO:0007669"/>
    <property type="project" value="UniProtKB-KW"/>
</dbReference>
<dbReference type="GO" id="GO:0016984">
    <property type="term" value="F:ribulose-bisphosphate carboxylase activity"/>
    <property type="evidence" value="ECO:0007669"/>
    <property type="project" value="UniProtKB-UniRule"/>
</dbReference>
<dbReference type="GO" id="GO:0006196">
    <property type="term" value="P:AMP catabolic process"/>
    <property type="evidence" value="ECO:0007669"/>
    <property type="project" value="UniProtKB-UniRule"/>
</dbReference>
<dbReference type="GO" id="GO:0015977">
    <property type="term" value="P:carbon fixation"/>
    <property type="evidence" value="ECO:0007669"/>
    <property type="project" value="UniProtKB-KW"/>
</dbReference>
<dbReference type="CDD" id="cd08213">
    <property type="entry name" value="RuBisCO_large_III"/>
    <property type="match status" value="1"/>
</dbReference>
<dbReference type="Gene3D" id="3.20.20.110">
    <property type="entry name" value="Ribulose bisphosphate carboxylase, large subunit, C-terminal domain"/>
    <property type="match status" value="1"/>
</dbReference>
<dbReference type="Gene3D" id="3.30.70.150">
    <property type="entry name" value="RuBisCO large subunit, N-terminal domain"/>
    <property type="match status" value="1"/>
</dbReference>
<dbReference type="HAMAP" id="MF_01133">
    <property type="entry name" value="RuBisCO_L_type3"/>
    <property type="match status" value="1"/>
</dbReference>
<dbReference type="InterPro" id="IPR033966">
    <property type="entry name" value="RuBisCO"/>
</dbReference>
<dbReference type="InterPro" id="IPR017712">
    <property type="entry name" value="RuBisCO_III"/>
</dbReference>
<dbReference type="InterPro" id="IPR000685">
    <property type="entry name" value="RuBisCO_lsu_C"/>
</dbReference>
<dbReference type="InterPro" id="IPR036376">
    <property type="entry name" value="RuBisCO_lsu_C_sf"/>
</dbReference>
<dbReference type="InterPro" id="IPR017443">
    <property type="entry name" value="RuBisCO_lsu_fd_N"/>
</dbReference>
<dbReference type="InterPro" id="IPR036422">
    <property type="entry name" value="RuBisCO_lsu_N_sf"/>
</dbReference>
<dbReference type="NCBIfam" id="NF003252">
    <property type="entry name" value="PRK04208.1"/>
    <property type="match status" value="1"/>
</dbReference>
<dbReference type="NCBIfam" id="TIGR03326">
    <property type="entry name" value="rubisco_III"/>
    <property type="match status" value="1"/>
</dbReference>
<dbReference type="PANTHER" id="PTHR42704">
    <property type="entry name" value="RIBULOSE BISPHOSPHATE CARBOXYLASE"/>
    <property type="match status" value="1"/>
</dbReference>
<dbReference type="PANTHER" id="PTHR42704:SF17">
    <property type="entry name" value="RIBULOSE BISPHOSPHATE CARBOXYLASE LARGE CHAIN"/>
    <property type="match status" value="1"/>
</dbReference>
<dbReference type="Pfam" id="PF00016">
    <property type="entry name" value="RuBisCO_large"/>
    <property type="match status" value="1"/>
</dbReference>
<dbReference type="Pfam" id="PF02788">
    <property type="entry name" value="RuBisCO_large_N"/>
    <property type="match status" value="1"/>
</dbReference>
<dbReference type="SFLD" id="SFLDS00014">
    <property type="entry name" value="RuBisCO"/>
    <property type="match status" value="1"/>
</dbReference>
<dbReference type="SFLD" id="SFLDG00301">
    <property type="entry name" value="RuBisCO-like_proteins"/>
    <property type="match status" value="1"/>
</dbReference>
<dbReference type="SUPFAM" id="SSF51649">
    <property type="entry name" value="RuBisCo, C-terminal domain"/>
    <property type="match status" value="1"/>
</dbReference>
<dbReference type="SUPFAM" id="SSF54966">
    <property type="entry name" value="RuBisCO, large subunit, small (N-terminal) domain"/>
    <property type="match status" value="1"/>
</dbReference>
<name>RBL_METJA</name>
<comment type="function">
    <text evidence="1">Catalyzes the addition of molecular CO(2) and H(2)O to ribulose 1,5-bisphosphate (RuBP), generating two molecules of 3-phosphoglycerate (3-PGA). Functions in an archaeal AMP degradation pathway, together with AMP phosphorylase and R15P isomerase.</text>
</comment>
<comment type="catalytic activity">
    <reaction evidence="1 2">
        <text>2 (2R)-3-phosphoglycerate + 2 H(+) = D-ribulose 1,5-bisphosphate + CO2 + H2O</text>
        <dbReference type="Rhea" id="RHEA:23124"/>
        <dbReference type="ChEBI" id="CHEBI:15377"/>
        <dbReference type="ChEBI" id="CHEBI:15378"/>
        <dbReference type="ChEBI" id="CHEBI:16526"/>
        <dbReference type="ChEBI" id="CHEBI:57870"/>
        <dbReference type="ChEBI" id="CHEBI:58272"/>
        <dbReference type="EC" id="4.1.1.39"/>
    </reaction>
</comment>
<comment type="catalytic activity">
    <reaction evidence="1 2">
        <text>D-ribulose 1,5-bisphosphate + O2 = 2-phosphoglycolate + (2R)-3-phosphoglycerate + 2 H(+)</text>
        <dbReference type="Rhea" id="RHEA:36631"/>
        <dbReference type="ChEBI" id="CHEBI:15378"/>
        <dbReference type="ChEBI" id="CHEBI:15379"/>
        <dbReference type="ChEBI" id="CHEBI:57870"/>
        <dbReference type="ChEBI" id="CHEBI:58033"/>
        <dbReference type="ChEBI" id="CHEBI:58272"/>
    </reaction>
</comment>
<comment type="cofactor">
    <cofactor evidence="1">
        <name>Mg(2+)</name>
        <dbReference type="ChEBI" id="CHEBI:18420"/>
    </cofactor>
    <text evidence="1">Binds 1 Mg(2+) ion per subunit.</text>
</comment>
<comment type="activity regulation">
    <text evidence="2 3">Reversibly inhibited by O(2).</text>
</comment>
<comment type="biophysicochemical properties">
    <temperatureDependence>
        <text evidence="3">Optimum temperature is 65 degrees Celsius. Highly thermostable.</text>
    </temperatureDependence>
</comment>
<comment type="subunit">
    <text evidence="2 3">Homodimer. In contrast to form I RuBisCO, the form III RuBisCO is composed solely of large subunits.</text>
</comment>
<comment type="miscellaneous">
    <text evidence="1">Because the Archaea possessing a type III RuBisCO are all anaerobic, it is most likely that only the carboxylase activity of RuBisCO, and not the competitive oxygenase activity (by which RuBP reacts with O(2) to form one molecule of 3-phosphoglycerate and one molecule of 2-phosphoglycolate), is biologically relevant in these strains.</text>
</comment>
<comment type="similarity">
    <text evidence="1">Belongs to the RuBisCO large chain family. Type III subfamily.</text>
</comment>
<sequence>MDYINLNYRPNEGDLLSCMVIKGENLEKLANEIAGESSIGTWTKVQTMKSDIYEKLRPKVYEIKEIGEENGYKVGLIKIAYPLYDFEINNMPGVLAGIAGNIFGMKIAKGLRILDFRFPAEFVKAYKGPRFGIEGVRETLKIKERPLLGTIVKPKVGLKTEEHAKVAYEAWVGGVDLVKDDENLTSQEFNKFEDRIYKTLEMRDKAEEETGERKAYMPNITAPYREMIRRAEIAEDAGSEYVMIDVVVCGFSAVQSFREEDFKFIIHAHRAMHAAMTRSRDFGISMLALAKIYRLLGVDQLHIGTVVGKMEGGEKEVKAIRDEIVYDKVEADNENKFFNQDWFDIKPVFPVSSGGVHPRLVPKIVEILGRDLIIQAGGGVHGHPDGTRAGAKAMRAAIEAIIEGKSLEEKAEEVAELKKALEYWK</sequence>
<reference key="1">
    <citation type="journal article" date="1996" name="Science">
        <title>Complete genome sequence of the methanogenic archaeon, Methanococcus jannaschii.</title>
        <authorList>
            <person name="Bult C.J."/>
            <person name="White O."/>
            <person name="Olsen G.J."/>
            <person name="Zhou L."/>
            <person name="Fleischmann R.D."/>
            <person name="Sutton G.G."/>
            <person name="Blake J.A."/>
            <person name="FitzGerald L.M."/>
            <person name="Clayton R.A."/>
            <person name="Gocayne J.D."/>
            <person name="Kerlavage A.R."/>
            <person name="Dougherty B.A."/>
            <person name="Tomb J.-F."/>
            <person name="Adams M.D."/>
            <person name="Reich C.I."/>
            <person name="Overbeek R."/>
            <person name="Kirkness E.F."/>
            <person name="Weinstock K.G."/>
            <person name="Merrick J.M."/>
            <person name="Glodek A."/>
            <person name="Scott J.L."/>
            <person name="Geoghagen N.S.M."/>
            <person name="Weidman J.F."/>
            <person name="Fuhrmann J.L."/>
            <person name="Nguyen D."/>
            <person name="Utterback T.R."/>
            <person name="Kelley J.M."/>
            <person name="Peterson J.D."/>
            <person name="Sadow P.W."/>
            <person name="Hanna M.C."/>
            <person name="Cotton M.D."/>
            <person name="Roberts K.M."/>
            <person name="Hurst M.A."/>
            <person name="Kaine B.P."/>
            <person name="Borodovsky M."/>
            <person name="Klenk H.-P."/>
            <person name="Fraser C.M."/>
            <person name="Smith H.O."/>
            <person name="Woese C.R."/>
            <person name="Venter J.C."/>
        </authorList>
    </citation>
    <scope>NUCLEOTIDE SEQUENCE [LARGE SCALE GENOMIC DNA]</scope>
    <source>
        <strain>ATCC 43067 / DSM 2661 / JAL-1 / JCM 10045 / NBRC 100440</strain>
    </source>
</reference>
<reference key="2">
    <citation type="journal article" date="1999" name="J. Bacteriol.">
        <title>Unusual ribulose 1,5-bisphosphate carboxylase/oxygenase of anoxic Archaea.</title>
        <authorList>
            <person name="Watson G.M.F."/>
            <person name="Yu J.-P."/>
            <person name="Tabita F.R."/>
        </authorList>
    </citation>
    <scope>CATALYTIC ACTIVITY</scope>
    <scope>ACTIVITY REGULATION</scope>
    <scope>SUBUNIT</scope>
    <source>
        <strain>ATCC 43067 / DSM 2661 / JAL-1 / JCM 10045 / NBRC 100440</strain>
    </source>
</reference>
<reference key="3">
    <citation type="journal article" date="2003" name="J. Bacteriol.">
        <title>Synthesis of catalytically active form III ribulose 1,5-bisphosphate carboxylase/oxygenase in archaea.</title>
        <authorList>
            <person name="Finn M.W."/>
            <person name="Tabita F.R."/>
        </authorList>
    </citation>
    <scope>ACTIVITY REGULATION</scope>
    <scope>BIOPHYSICOCHEMICAL PROPERTIES</scope>
    <scope>SUBUNIT</scope>
    <source>
        <strain>ATCC 43067 / DSM 2661 / JAL-1 / JCM 10045 / NBRC 100440</strain>
    </source>
</reference>
<evidence type="ECO:0000255" key="1">
    <source>
        <dbReference type="HAMAP-Rule" id="MF_01133"/>
    </source>
</evidence>
<evidence type="ECO:0000269" key="2">
    <source>
    </source>
</evidence>
<evidence type="ECO:0000269" key="3">
    <source>
    </source>
</evidence>